<protein>
    <recommendedName>
        <fullName evidence="3">BBSome complex member BBS5</fullName>
    </recommendedName>
    <alternativeName>
        <fullName>Bardet-Biedl syndrome 5 protein homolog</fullName>
    </alternativeName>
</protein>
<proteinExistence type="evidence at transcript level"/>
<accession>Q4R649</accession>
<organism>
    <name type="scientific">Macaca fascicularis</name>
    <name type="common">Crab-eating macaque</name>
    <name type="synonym">Cynomolgus monkey</name>
    <dbReference type="NCBI Taxonomy" id="9541"/>
    <lineage>
        <taxon>Eukaryota</taxon>
        <taxon>Metazoa</taxon>
        <taxon>Chordata</taxon>
        <taxon>Craniata</taxon>
        <taxon>Vertebrata</taxon>
        <taxon>Euteleostomi</taxon>
        <taxon>Mammalia</taxon>
        <taxon>Eutheria</taxon>
        <taxon>Euarchontoglires</taxon>
        <taxon>Primates</taxon>
        <taxon>Haplorrhini</taxon>
        <taxon>Catarrhini</taxon>
        <taxon>Cercopithecidae</taxon>
        <taxon>Cercopithecinae</taxon>
        <taxon>Macaca</taxon>
    </lineage>
</organism>
<feature type="chain" id="PRO_0000223255" description="BBSome complex member BBS5">
    <location>
        <begin position="1"/>
        <end position="341"/>
    </location>
</feature>
<dbReference type="EMBL" id="AB169341">
    <property type="protein sequence ID" value="BAE01426.1"/>
    <property type="status" value="ALT_INIT"/>
    <property type="molecule type" value="mRNA"/>
</dbReference>
<dbReference type="RefSeq" id="NP_001270514.1">
    <property type="nucleotide sequence ID" value="NM_001283585.1"/>
</dbReference>
<dbReference type="RefSeq" id="XP_015287559.1">
    <property type="nucleotide sequence ID" value="XM_015432073.3"/>
</dbReference>
<dbReference type="RefSeq" id="XP_015287560.1">
    <property type="nucleotide sequence ID" value="XM_015432074.1"/>
</dbReference>
<dbReference type="SMR" id="Q4R649"/>
<dbReference type="STRING" id="9541.ENSMFAP00000006176"/>
<dbReference type="GeneID" id="101865542"/>
<dbReference type="KEGG" id="mcf:101865542"/>
<dbReference type="CTD" id="129880"/>
<dbReference type="VEuPathDB" id="HostDB:ENSMFAG00000040347"/>
<dbReference type="eggNOG" id="ENOG502QR2Z">
    <property type="taxonomic scope" value="Eukaryota"/>
</dbReference>
<dbReference type="OMA" id="PNFGIQY"/>
<dbReference type="OrthoDB" id="12849at314294"/>
<dbReference type="Proteomes" id="UP000233100">
    <property type="component" value="Chromosome 12"/>
</dbReference>
<dbReference type="GO" id="GO:0034464">
    <property type="term" value="C:BBSome"/>
    <property type="evidence" value="ECO:0007669"/>
    <property type="project" value="InterPro"/>
</dbReference>
<dbReference type="GO" id="GO:0034451">
    <property type="term" value="C:centriolar satellite"/>
    <property type="evidence" value="ECO:0007669"/>
    <property type="project" value="UniProtKB-SubCell"/>
</dbReference>
<dbReference type="GO" id="GO:0036064">
    <property type="term" value="C:ciliary basal body"/>
    <property type="evidence" value="ECO:0007669"/>
    <property type="project" value="TreeGrafter"/>
</dbReference>
<dbReference type="GO" id="GO:0060170">
    <property type="term" value="C:ciliary membrane"/>
    <property type="evidence" value="ECO:0007669"/>
    <property type="project" value="UniProtKB-SubCell"/>
</dbReference>
<dbReference type="GO" id="GO:0005737">
    <property type="term" value="C:cytoplasm"/>
    <property type="evidence" value="ECO:0007669"/>
    <property type="project" value="UniProtKB-SubCell"/>
</dbReference>
<dbReference type="GO" id="GO:0032266">
    <property type="term" value="F:phosphatidylinositol-3-phosphate binding"/>
    <property type="evidence" value="ECO:0007669"/>
    <property type="project" value="TreeGrafter"/>
</dbReference>
<dbReference type="GO" id="GO:0060271">
    <property type="term" value="P:cilium assembly"/>
    <property type="evidence" value="ECO:0007669"/>
    <property type="project" value="TreeGrafter"/>
</dbReference>
<dbReference type="GO" id="GO:0046907">
    <property type="term" value="P:intracellular transport"/>
    <property type="evidence" value="ECO:0007669"/>
    <property type="project" value="TreeGrafter"/>
</dbReference>
<dbReference type="GO" id="GO:0015031">
    <property type="term" value="P:protein transport"/>
    <property type="evidence" value="ECO:0007669"/>
    <property type="project" value="UniProtKB-KW"/>
</dbReference>
<dbReference type="CDD" id="cd00900">
    <property type="entry name" value="PH-like"/>
    <property type="match status" value="1"/>
</dbReference>
<dbReference type="FunFam" id="2.30.29.30:FF:000232">
    <property type="entry name" value="Bardet-Biedl syndrome 5 isoform 1"/>
    <property type="match status" value="1"/>
</dbReference>
<dbReference type="Gene3D" id="2.30.29.30">
    <property type="entry name" value="Pleckstrin-homology domain (PH domain)/Phosphotyrosine-binding domain (PTB)"/>
    <property type="match status" value="1"/>
</dbReference>
<dbReference type="InterPro" id="IPR006606">
    <property type="entry name" value="BBL5"/>
</dbReference>
<dbReference type="InterPro" id="IPR030804">
    <property type="entry name" value="BBS5/fem-3"/>
</dbReference>
<dbReference type="InterPro" id="IPR014003">
    <property type="entry name" value="BBS5_PH"/>
</dbReference>
<dbReference type="InterPro" id="IPR011993">
    <property type="entry name" value="PH-like_dom_sf"/>
</dbReference>
<dbReference type="PANTHER" id="PTHR21351:SF0">
    <property type="entry name" value="BARDET-BIEDL SYNDROME 5 PROTEIN"/>
    <property type="match status" value="1"/>
</dbReference>
<dbReference type="PANTHER" id="PTHR21351">
    <property type="entry name" value="BARDET-BIEDL SYNDROME PROTEIN 5"/>
    <property type="match status" value="1"/>
</dbReference>
<dbReference type="Pfam" id="PF07289">
    <property type="entry name" value="BBL5"/>
    <property type="match status" value="1"/>
</dbReference>
<dbReference type="PIRSF" id="PIRSF010072">
    <property type="entry name" value="DUF1448"/>
    <property type="match status" value="1"/>
</dbReference>
<dbReference type="SMART" id="SM00683">
    <property type="entry name" value="DM16"/>
    <property type="match status" value="2"/>
</dbReference>
<evidence type="ECO:0000250" key="1"/>
<evidence type="ECO:0000250" key="2">
    <source>
        <dbReference type="UniProtKB" id="Q8N3I7"/>
    </source>
</evidence>
<evidence type="ECO:0000305" key="3"/>
<reference key="1">
    <citation type="submission" date="2005-06" db="EMBL/GenBank/DDBJ databases">
        <title>DNA sequences of macaque genes expressed in brain or testis and its evolutionary implications.</title>
        <authorList>
            <consortium name="International consortium for macaque cDNA sequencing and analysis"/>
        </authorList>
    </citation>
    <scope>NUCLEOTIDE SEQUENCE [LARGE SCALE MRNA] OF 2-341</scope>
    <source>
        <tissue>Testis</tissue>
    </source>
</reference>
<sequence>MSVLDALWEDRDVRFDLSSQQMKTRPGEVLIDCLDSIEDTKGNNGDRGRLLVTNLRILWHSLALSRVNVSVGYNCILNITTRTANSKLRGQTEALYILTKCNSTRFEFIFTNLVPGSPRLFTSVMAVHRAYETSKMYRDFKLRSALIQNKQLRLLPQEHVYDKINGVWNLSSDQGNLGTFFITNVRIVWHANMNDSFNVSIPYLQIRSIKIRDSKFGLALVIESSQQSGGYVLGFKIDPVEKLQESVKEINSLHKVYSASPIFGVDYEMEEKPQPLEALTVEQIQDDVEIDSDDHTDAFVAYFADGNKQQDREPVFSEELGLAIEKLKDGFTLQGLWEVMS</sequence>
<keyword id="KW-1003">Cell membrane</keyword>
<keyword id="KW-0966">Cell projection</keyword>
<keyword id="KW-0969">Cilium</keyword>
<keyword id="KW-0970">Cilium biogenesis/degradation</keyword>
<keyword id="KW-0963">Cytoplasm</keyword>
<keyword id="KW-0206">Cytoskeleton</keyword>
<keyword id="KW-0472">Membrane</keyword>
<keyword id="KW-0653">Protein transport</keyword>
<keyword id="KW-1185">Reference proteome</keyword>
<keyword id="KW-0813">Transport</keyword>
<comment type="function">
    <text evidence="1">The BBSome complex is thought to function as a coat complex required for sorting of specific membrane proteins to the primary cilia. The BBSome complex is required for ciliogenesis but is dispensable for centriolar satellite function. This ciliogenic function is mediated in part by the Rab8 GDP/GTP exchange factor, which localizes to the basal body and contacts the BBSome. Rab8(GTP) enters the primary cilium and promotes extension of the ciliary membrane. Firstly the BBSome associates with the ciliary membrane and binds to RAB3IP/Rabin8, the guanosyl exchange factor (GEF) for Rab8 and then the Rab8-GTP localizes to the cilium and promotes docking and fusion of carrier vesicles to the base of the ciliary membrane. The BBSome complex, together with the LTZL1, controls SMO ciliary trafficking and contributes to the sonic hedgehog (SHH) pathway regulation. Required for BBSome complex ciliary localization but not for the proper complex assembly (By similarity).</text>
</comment>
<comment type="subunit">
    <text evidence="2">Part of BBSome complex, that contains BBS1, BBS2, BBS4, BBS5, BBS7, BBS8/TTC8, BBS9 and BBIP10 (By similarity). Binds to phosphoinositides (By similarity). Interacts with CCDC28B. Interacts with SMO; the interaction is indicative for the association of SMO with the BBsome complex to facilitate ciliary localization of SMO (By similarity). Interacts with PKD1 (By similarity). Interacts with DLEC1 (By similarity).</text>
</comment>
<comment type="subcellular location">
    <subcellularLocation>
        <location evidence="1">Cell projection</location>
        <location evidence="1">Cilium membrane</location>
    </subcellularLocation>
    <subcellularLocation>
        <location evidence="1">Cytoplasm</location>
    </subcellularLocation>
    <subcellularLocation>
        <location evidence="1">Cytoplasm</location>
        <location evidence="1">Cytoskeleton</location>
        <location evidence="1">Cilium basal body</location>
    </subcellularLocation>
    <subcellularLocation>
        <location evidence="1">Cytoplasm</location>
        <location evidence="1">Cytoskeleton</location>
        <location evidence="1">Microtubule organizing center</location>
        <location evidence="1">Centrosome</location>
        <location evidence="1">Centriolar satellite</location>
    </subcellularLocation>
    <text>Localizes to basal bodies.</text>
</comment>
<comment type="similarity">
    <text evidence="3">Belongs to the BBS5 family.</text>
</comment>
<comment type="sequence caution" evidence="3">
    <conflict type="erroneous initiation">
        <sequence resource="EMBL-CDS" id="BAE01426"/>
    </conflict>
    <text>Truncated N-terminus.</text>
</comment>
<gene>
    <name type="primary">BBS5</name>
    <name type="ORF">QtsA-19140</name>
</gene>
<name>BBS5_MACFA</name>